<keyword id="KW-0963">Cytoplasm</keyword>
<keyword id="KW-0396">Initiation factor</keyword>
<keyword id="KW-1017">Isopeptide bond</keyword>
<keyword id="KW-0648">Protein biosynthesis</keyword>
<keyword id="KW-1185">Reference proteome</keyword>
<keyword id="KW-0694">RNA-binding</keyword>
<keyword id="KW-0820">tRNA-binding</keyword>
<keyword id="KW-0832">Ubl conjugation</keyword>
<evidence type="ECO:0000250" key="1">
    <source>
        <dbReference type="UniProtKB" id="O14602"/>
    </source>
</evidence>
<evidence type="ECO:0000250" key="2">
    <source>
        <dbReference type="UniProtKB" id="P47813"/>
    </source>
</evidence>
<evidence type="ECO:0000256" key="3">
    <source>
        <dbReference type="SAM" id="MobiDB-lite"/>
    </source>
</evidence>
<evidence type="ECO:0000305" key="4"/>
<organism>
    <name type="scientific">Pan troglodytes</name>
    <name type="common">Chimpanzee</name>
    <dbReference type="NCBI Taxonomy" id="9598"/>
    <lineage>
        <taxon>Eukaryota</taxon>
        <taxon>Metazoa</taxon>
        <taxon>Chordata</taxon>
        <taxon>Craniata</taxon>
        <taxon>Vertebrata</taxon>
        <taxon>Euteleostomi</taxon>
        <taxon>Mammalia</taxon>
        <taxon>Eutheria</taxon>
        <taxon>Euarchontoglires</taxon>
        <taxon>Primates</taxon>
        <taxon>Haplorrhini</taxon>
        <taxon>Catarrhini</taxon>
        <taxon>Hominidae</taxon>
        <taxon>Pan</taxon>
    </lineage>
</organism>
<accession>Q6GVM3</accession>
<sequence>MPKNKGKGGKNRRRGKNENESEKRELVFKEDGQEYAQVIKMLGNGRLEALCFDGVKRLCHIRGKLRKKVWINTSDIILVGLRDYQDNKADVILKYNADEARSLKAYGELPEHAKINETDTFGPGDDDEVQFDDIGDDDEDIDDI</sequence>
<comment type="function">
    <text evidence="2">Component of the 43S pre-initiation complex (43S PIC), which binds to the mRNA cap-proximal region, scans mRNA 5'-untranslated region, and locates the initiation codon. This protein enhances formation of the cap-proximal complex. Together with EIF1, facilitates scanning, start codon recognition, promotion of the assembly of 48S complex at the initiation codon (43S PIC becomes 48S PIC after the start codon is reached), and dissociation of aberrant complexes. After start codon location, together with EIF5B orients the initiator methionine-tRNA in a conformation that allows 60S ribosomal subunit joining to form the 80S initiation complex. Is released after 80S initiation complex formation, just after GTP hydrolysis by EIF5B, and before release of EIF5B. Its globular part is located in the A site of the 40S ribosomal subunit. Its interaction with EIF5 during scanning contribute to the maintenance of EIF1 within the open 43S PIC. In contrast to yeast orthologs, does not bind EIF1.</text>
</comment>
<comment type="subunit">
    <text evidence="2">Component of the 43S pre-initiation complex (43S PIC), which is composed of the 40S ribosomal subunit, EIF1, eIF1A (EIF1AX), eIF3 complex, EIF5 and eIF2-GTP-initiator tRNA complex (eIF2 ternary complex). Interacts with EIF5; this interaction contributes to the maintenance of EIF1 within the open 43S PIC. Interacts through its C-terminal domain (CTD) with the CTD of EIF5B; from the location of the start codon by the 43S complex until the formation of the 80S complex.</text>
</comment>
<comment type="subcellular location">
    <subcellularLocation>
        <location evidence="4">Cytoplasm</location>
    </subcellularLocation>
</comment>
<comment type="tissue specificity">
    <text>Ubiquitous.</text>
</comment>
<comment type="similarity">
    <text evidence="4">Belongs to the eIF-1A family.</text>
</comment>
<gene>
    <name type="primary">EIF1AY</name>
</gene>
<feature type="chain" id="PRO_0000145103" description="Eukaryotic translation initiation factor 1A, Y-chromosomal">
    <location>
        <begin position="1"/>
        <end position="144"/>
    </location>
</feature>
<feature type="domain" description="S1-like">
    <location>
        <begin position="22"/>
        <end position="96"/>
    </location>
</feature>
<feature type="region of interest" description="Disordered" evidence="3">
    <location>
        <begin position="1"/>
        <end position="26"/>
    </location>
</feature>
<feature type="region of interest" description="Disordered" evidence="3">
    <location>
        <begin position="114"/>
        <end position="144"/>
    </location>
</feature>
<feature type="compositionally biased region" description="Basic residues" evidence="3">
    <location>
        <begin position="1"/>
        <end position="15"/>
    </location>
</feature>
<feature type="compositionally biased region" description="Basic and acidic residues" evidence="3">
    <location>
        <begin position="16"/>
        <end position="26"/>
    </location>
</feature>
<feature type="compositionally biased region" description="Acidic residues" evidence="3">
    <location>
        <begin position="124"/>
        <end position="144"/>
    </location>
</feature>
<feature type="cross-link" description="Glycyl lysine isopeptide (Lys-Gly) (interchain with G-Cter in ubiquitin)" evidence="1">
    <location>
        <position position="88"/>
    </location>
</feature>
<name>IF1AY_PANTR</name>
<reference key="1">
    <citation type="submission" date="2004-05" db="EMBL/GenBank/DDBJ databases">
        <title>The DNA sequence of the chimpanzee Y chromosome.</title>
        <authorList>
            <person name="Hughes J.F."/>
            <person name="Pyntikova T."/>
            <person name="Skaletsky H."/>
            <person name="Minx P.J."/>
            <person name="Rozen S."/>
            <person name="Wilson R.K."/>
            <person name="Page D.C."/>
        </authorList>
    </citation>
    <scope>NUCLEOTIDE SEQUENCE [MRNA]</scope>
</reference>
<protein>
    <recommendedName>
        <fullName>Eukaryotic translation initiation factor 1A, Y-chromosomal</fullName>
        <shortName>eIF-1A Y isoform</shortName>
        <shortName>eIF1A Y isoform</shortName>
    </recommendedName>
    <alternativeName>
        <fullName>Eukaryotic translation initiation factor 4C</fullName>
        <shortName>eIF-4C</shortName>
    </alternativeName>
</protein>
<proteinExistence type="evidence at transcript level"/>
<dbReference type="EMBL" id="AY633115">
    <property type="protein sequence ID" value="AAT46352.1"/>
    <property type="molecule type" value="mRNA"/>
</dbReference>
<dbReference type="RefSeq" id="NP_001008977.1">
    <property type="nucleotide sequence ID" value="NM_001008977.1"/>
</dbReference>
<dbReference type="SMR" id="Q6GVM3"/>
<dbReference type="FunCoup" id="Q6GVM3">
    <property type="interactions" value="2141"/>
</dbReference>
<dbReference type="STRING" id="9598.ENSPTRP00000038797"/>
<dbReference type="PaxDb" id="9598-ENSPTRP00000038797"/>
<dbReference type="Ensembl" id="ENSPTRT00000042030.4">
    <property type="protein sequence ID" value="ENSPTRP00000038797.3"/>
    <property type="gene ID" value="ENSPTRG00000022504.7"/>
</dbReference>
<dbReference type="GeneID" id="449499"/>
<dbReference type="KEGG" id="ptr:449499"/>
<dbReference type="CTD" id="9086"/>
<dbReference type="eggNOG" id="KOG3403">
    <property type="taxonomic scope" value="Eukaryota"/>
</dbReference>
<dbReference type="GeneTree" id="ENSGT00390000008256"/>
<dbReference type="HOGENOM" id="CLU_109098_0_1_1"/>
<dbReference type="InParanoid" id="Q6GVM3"/>
<dbReference type="OMA" id="INENTWE"/>
<dbReference type="OrthoDB" id="15498at9604"/>
<dbReference type="TreeFam" id="TF350394"/>
<dbReference type="Proteomes" id="UP000002277">
    <property type="component" value="Chromosome Y"/>
</dbReference>
<dbReference type="Bgee" id="ENSPTRG00000022504">
    <property type="expression patterns" value="Expressed in testis and 20 other cell types or tissues"/>
</dbReference>
<dbReference type="GO" id="GO:0005737">
    <property type="term" value="C:cytoplasm"/>
    <property type="evidence" value="ECO:0000318"/>
    <property type="project" value="GO_Central"/>
</dbReference>
<dbReference type="GO" id="GO:0003743">
    <property type="term" value="F:translation initiation factor activity"/>
    <property type="evidence" value="ECO:0000318"/>
    <property type="project" value="GO_Central"/>
</dbReference>
<dbReference type="GO" id="GO:0000049">
    <property type="term" value="F:tRNA binding"/>
    <property type="evidence" value="ECO:0007669"/>
    <property type="project" value="UniProtKB-KW"/>
</dbReference>
<dbReference type="GO" id="GO:0006413">
    <property type="term" value="P:translational initiation"/>
    <property type="evidence" value="ECO:0000318"/>
    <property type="project" value="GO_Central"/>
</dbReference>
<dbReference type="CDD" id="cd05793">
    <property type="entry name" value="S1_IF1A"/>
    <property type="match status" value="1"/>
</dbReference>
<dbReference type="FunFam" id="2.40.50.140:FF:000071">
    <property type="entry name" value="Eukaryotic translation initiation factor 1A"/>
    <property type="match status" value="1"/>
</dbReference>
<dbReference type="Gene3D" id="2.40.50.140">
    <property type="entry name" value="Nucleic acid-binding proteins"/>
    <property type="match status" value="1"/>
</dbReference>
<dbReference type="HAMAP" id="MF_00216">
    <property type="entry name" value="aIF_1A"/>
    <property type="match status" value="1"/>
</dbReference>
<dbReference type="InterPro" id="IPR012340">
    <property type="entry name" value="NA-bd_OB-fold"/>
</dbReference>
<dbReference type="InterPro" id="IPR006196">
    <property type="entry name" value="RNA-binding_domain_S1_IF1"/>
</dbReference>
<dbReference type="InterPro" id="IPR001253">
    <property type="entry name" value="TIF_eIF-1A"/>
</dbReference>
<dbReference type="InterPro" id="IPR018104">
    <property type="entry name" value="TIF_eIF-1A_CS"/>
</dbReference>
<dbReference type="NCBIfam" id="TIGR00523">
    <property type="entry name" value="eIF-1A"/>
    <property type="match status" value="1"/>
</dbReference>
<dbReference type="PANTHER" id="PTHR21668">
    <property type="entry name" value="EIF-1A"/>
    <property type="match status" value="1"/>
</dbReference>
<dbReference type="Pfam" id="PF01176">
    <property type="entry name" value="eIF-1a"/>
    <property type="match status" value="1"/>
</dbReference>
<dbReference type="SMART" id="SM00652">
    <property type="entry name" value="eIF1a"/>
    <property type="match status" value="1"/>
</dbReference>
<dbReference type="SUPFAM" id="SSF50249">
    <property type="entry name" value="Nucleic acid-binding proteins"/>
    <property type="match status" value="1"/>
</dbReference>
<dbReference type="PROSITE" id="PS01262">
    <property type="entry name" value="IF1A"/>
    <property type="match status" value="1"/>
</dbReference>
<dbReference type="PROSITE" id="PS50832">
    <property type="entry name" value="S1_IF1_TYPE"/>
    <property type="match status" value="1"/>
</dbReference>